<sequence length="203" mass="22619">MKDLTDKQQAVLAFITAIIKERGFPPTIREIGDEFGITAKGAYDHLKAIEKKGYLKTAKNQSRAIELIRQSPMESLPVQATSIPVIGQVAAGLPIFAEENIESYIPVPDEMAKGNVPMYALRVQGDSMIEVGINDGDIAIIEKRDIARNGEIVVALIEDEATLKVYYKEQDQIRLEARNPKYKPIKTKKATVMGKLIGLYRIY</sequence>
<evidence type="ECO:0000255" key="1">
    <source>
        <dbReference type="HAMAP-Rule" id="MF_00015"/>
    </source>
</evidence>
<evidence type="ECO:0000305" key="2"/>
<comment type="function">
    <text evidence="1">Represses a number of genes involved in the response to DNA damage (SOS response), including recA and lexA. In the presence of single-stranded DNA, RecA interacts with LexA causing an autocatalytic cleavage which disrupts the DNA-binding part of LexA, leading to derepression of the SOS regulon and eventually DNA repair.</text>
</comment>
<comment type="catalytic activity">
    <reaction evidence="1">
        <text>Hydrolysis of Ala-|-Gly bond in repressor LexA.</text>
        <dbReference type="EC" id="3.4.21.88"/>
    </reaction>
</comment>
<comment type="subunit">
    <text evidence="1">Homodimer.</text>
</comment>
<comment type="similarity">
    <text evidence="1">Belongs to the peptidase S24 family.</text>
</comment>
<comment type="sequence caution" evidence="2">
    <conflict type="erroneous initiation">
        <sequence resource="EMBL-CDS" id="AAS70876"/>
    </conflict>
</comment>
<keyword id="KW-0068">Autocatalytic cleavage</keyword>
<keyword id="KW-0227">DNA damage</keyword>
<keyword id="KW-0234">DNA repair</keyword>
<keyword id="KW-0235">DNA replication</keyword>
<keyword id="KW-0238">DNA-binding</keyword>
<keyword id="KW-0378">Hydrolase</keyword>
<keyword id="KW-0678">Repressor</keyword>
<keyword id="KW-0742">SOS response</keyword>
<keyword id="KW-0804">Transcription</keyword>
<keyword id="KW-0805">Transcription regulation</keyword>
<reference key="1">
    <citation type="journal article" date="2004" name="J. Bacteriol.">
        <title>Comparative genomics of two Leptospira interrogans serovars reveals novel insights into physiology and pathogenesis.</title>
        <authorList>
            <person name="Nascimento A.L.T.O."/>
            <person name="Ko A.I."/>
            <person name="Martins E.A.L."/>
            <person name="Monteiro-Vitorello C.B."/>
            <person name="Ho P.L."/>
            <person name="Haake D.A."/>
            <person name="Verjovski-Almeida S."/>
            <person name="Hartskeerl R.A."/>
            <person name="Marques M.V."/>
            <person name="Oliveira M.C."/>
            <person name="Menck C.F.M."/>
            <person name="Leite L.C.C."/>
            <person name="Carrer H."/>
            <person name="Coutinho L.L."/>
            <person name="Degrave W.M."/>
            <person name="Dellagostin O.A."/>
            <person name="El-Dorry H."/>
            <person name="Ferro E.S."/>
            <person name="Ferro M.I.T."/>
            <person name="Furlan L.R."/>
            <person name="Gamberini M."/>
            <person name="Giglioti E.A."/>
            <person name="Goes-Neto A."/>
            <person name="Goldman G.H."/>
            <person name="Goldman M.H.S."/>
            <person name="Harakava R."/>
            <person name="Jeronimo S.M.B."/>
            <person name="Junqueira-de-Azevedo I.L.M."/>
            <person name="Kimura E.T."/>
            <person name="Kuramae E.E."/>
            <person name="Lemos E.G.M."/>
            <person name="Lemos M.V.F."/>
            <person name="Marino C.L."/>
            <person name="Nunes L.R."/>
            <person name="de Oliveira R.C."/>
            <person name="Pereira G.G."/>
            <person name="Reis M.S."/>
            <person name="Schriefer A."/>
            <person name="Siqueira W.J."/>
            <person name="Sommer P."/>
            <person name="Tsai S.M."/>
            <person name="Simpson A.J.G."/>
            <person name="Ferro J.A."/>
            <person name="Camargo L.E.A."/>
            <person name="Kitajima J.P."/>
            <person name="Setubal J.C."/>
            <person name="Van Sluys M.A."/>
        </authorList>
    </citation>
    <scope>NUCLEOTIDE SEQUENCE [LARGE SCALE GENOMIC DNA]</scope>
    <source>
        <strain>Fiocruz L1-130</strain>
    </source>
</reference>
<gene>
    <name evidence="1" type="primary">lexA</name>
    <name type="ordered locus">LIC_12305</name>
</gene>
<organism>
    <name type="scientific">Leptospira interrogans serogroup Icterohaemorrhagiae serovar copenhageni (strain Fiocruz L1-130)</name>
    <dbReference type="NCBI Taxonomy" id="267671"/>
    <lineage>
        <taxon>Bacteria</taxon>
        <taxon>Pseudomonadati</taxon>
        <taxon>Spirochaetota</taxon>
        <taxon>Spirochaetia</taxon>
        <taxon>Leptospirales</taxon>
        <taxon>Leptospiraceae</taxon>
        <taxon>Leptospira</taxon>
    </lineage>
</organism>
<feature type="chain" id="PRO_0000170049" description="LexA repressor">
    <location>
        <begin position="1"/>
        <end position="203"/>
    </location>
</feature>
<feature type="DNA-binding region" description="H-T-H motif" evidence="1">
    <location>
        <begin position="28"/>
        <end position="47"/>
    </location>
</feature>
<feature type="active site" description="For autocatalytic cleavage activity" evidence="1">
    <location>
        <position position="127"/>
    </location>
</feature>
<feature type="active site" description="For autocatalytic cleavage activity" evidence="1">
    <location>
        <position position="164"/>
    </location>
</feature>
<feature type="site" description="Cleavage; by autolysis" evidence="1">
    <location>
        <begin position="91"/>
        <end position="92"/>
    </location>
</feature>
<name>LEXA_LEPIC</name>
<accession>P61611</accession>
<dbReference type="EC" id="3.4.21.88" evidence="1"/>
<dbReference type="EMBL" id="AE016823">
    <property type="protein sequence ID" value="AAS70876.1"/>
    <property type="status" value="ALT_INIT"/>
    <property type="molecule type" value="Genomic_DNA"/>
</dbReference>
<dbReference type="RefSeq" id="WP_000654116.1">
    <property type="nucleotide sequence ID" value="NC_005823.1"/>
</dbReference>
<dbReference type="SMR" id="P61611"/>
<dbReference type="MEROPS" id="S24.001"/>
<dbReference type="GeneID" id="61142189"/>
<dbReference type="KEGG" id="lic:LIC_12305"/>
<dbReference type="HOGENOM" id="CLU_066192_45_1_12"/>
<dbReference type="Proteomes" id="UP000007037">
    <property type="component" value="Chromosome I"/>
</dbReference>
<dbReference type="CollecTF" id="EXPREG_00000bb0"/>
<dbReference type="GO" id="GO:0003677">
    <property type="term" value="F:DNA binding"/>
    <property type="evidence" value="ECO:0007669"/>
    <property type="project" value="UniProtKB-UniRule"/>
</dbReference>
<dbReference type="GO" id="GO:0004252">
    <property type="term" value="F:serine-type endopeptidase activity"/>
    <property type="evidence" value="ECO:0007669"/>
    <property type="project" value="UniProtKB-UniRule"/>
</dbReference>
<dbReference type="GO" id="GO:0006281">
    <property type="term" value="P:DNA repair"/>
    <property type="evidence" value="ECO:0007669"/>
    <property type="project" value="UniProtKB-UniRule"/>
</dbReference>
<dbReference type="GO" id="GO:0006260">
    <property type="term" value="P:DNA replication"/>
    <property type="evidence" value="ECO:0007669"/>
    <property type="project" value="UniProtKB-UniRule"/>
</dbReference>
<dbReference type="GO" id="GO:0045892">
    <property type="term" value="P:negative regulation of DNA-templated transcription"/>
    <property type="evidence" value="ECO:0000269"/>
    <property type="project" value="CollecTF"/>
</dbReference>
<dbReference type="GO" id="GO:0006508">
    <property type="term" value="P:proteolysis"/>
    <property type="evidence" value="ECO:0007669"/>
    <property type="project" value="InterPro"/>
</dbReference>
<dbReference type="GO" id="GO:0009432">
    <property type="term" value="P:SOS response"/>
    <property type="evidence" value="ECO:0000269"/>
    <property type="project" value="CollecTF"/>
</dbReference>
<dbReference type="CDD" id="cd06529">
    <property type="entry name" value="S24_LexA-like"/>
    <property type="match status" value="1"/>
</dbReference>
<dbReference type="FunFam" id="1.10.10.10:FF:000009">
    <property type="entry name" value="LexA repressor"/>
    <property type="match status" value="1"/>
</dbReference>
<dbReference type="FunFam" id="2.10.109.10:FF:000001">
    <property type="entry name" value="LexA repressor"/>
    <property type="match status" value="1"/>
</dbReference>
<dbReference type="Gene3D" id="2.10.109.10">
    <property type="entry name" value="Umud Fragment, subunit A"/>
    <property type="match status" value="1"/>
</dbReference>
<dbReference type="Gene3D" id="1.10.10.10">
    <property type="entry name" value="Winged helix-like DNA-binding domain superfamily/Winged helix DNA-binding domain"/>
    <property type="match status" value="1"/>
</dbReference>
<dbReference type="HAMAP" id="MF_00015">
    <property type="entry name" value="LexA"/>
    <property type="match status" value="1"/>
</dbReference>
<dbReference type="InterPro" id="IPR006200">
    <property type="entry name" value="LexA"/>
</dbReference>
<dbReference type="InterPro" id="IPR039418">
    <property type="entry name" value="LexA-like"/>
</dbReference>
<dbReference type="InterPro" id="IPR036286">
    <property type="entry name" value="LexA/Signal_pep-like_sf"/>
</dbReference>
<dbReference type="InterPro" id="IPR006199">
    <property type="entry name" value="LexA_DNA-bd_dom"/>
</dbReference>
<dbReference type="InterPro" id="IPR050077">
    <property type="entry name" value="LexA_repressor"/>
</dbReference>
<dbReference type="InterPro" id="IPR006197">
    <property type="entry name" value="Peptidase_S24_LexA"/>
</dbReference>
<dbReference type="InterPro" id="IPR015927">
    <property type="entry name" value="Peptidase_S24_S26A/B/C"/>
</dbReference>
<dbReference type="InterPro" id="IPR036388">
    <property type="entry name" value="WH-like_DNA-bd_sf"/>
</dbReference>
<dbReference type="InterPro" id="IPR036390">
    <property type="entry name" value="WH_DNA-bd_sf"/>
</dbReference>
<dbReference type="NCBIfam" id="TIGR00498">
    <property type="entry name" value="lexA"/>
    <property type="match status" value="1"/>
</dbReference>
<dbReference type="PANTHER" id="PTHR33516">
    <property type="entry name" value="LEXA REPRESSOR"/>
    <property type="match status" value="1"/>
</dbReference>
<dbReference type="PANTHER" id="PTHR33516:SF2">
    <property type="entry name" value="LEXA REPRESSOR-RELATED"/>
    <property type="match status" value="1"/>
</dbReference>
<dbReference type="Pfam" id="PF01726">
    <property type="entry name" value="LexA_DNA_bind"/>
    <property type="match status" value="1"/>
</dbReference>
<dbReference type="Pfam" id="PF00717">
    <property type="entry name" value="Peptidase_S24"/>
    <property type="match status" value="1"/>
</dbReference>
<dbReference type="PRINTS" id="PR00726">
    <property type="entry name" value="LEXASERPTASE"/>
</dbReference>
<dbReference type="SUPFAM" id="SSF51306">
    <property type="entry name" value="LexA/Signal peptidase"/>
    <property type="match status" value="1"/>
</dbReference>
<dbReference type="SUPFAM" id="SSF46785">
    <property type="entry name" value="Winged helix' DNA-binding domain"/>
    <property type="match status" value="1"/>
</dbReference>
<protein>
    <recommendedName>
        <fullName evidence="1">LexA repressor</fullName>
        <ecNumber evidence="1">3.4.21.88</ecNumber>
    </recommendedName>
</protein>
<proteinExistence type="inferred from homology"/>